<gene>
    <name type="ordered locus">YJL222W-A</name>
</gene>
<feature type="chain" id="PRO_0000406045" description="Putative UPF0377 protein YJL222W-A">
    <location>
        <begin position="1"/>
        <end position="75"/>
    </location>
</feature>
<reference key="1">
    <citation type="journal article" date="1994" name="Yeast">
        <title>Sequence analysis of a 40.2 kb DNA fragment located near the left telomere of yeast chromosome X.</title>
        <authorList>
            <person name="Vandenbol M."/>
            <person name="Durand P."/>
            <person name="Bolle P.-A."/>
            <person name="Dion C."/>
            <person name="Portetelle D."/>
            <person name="Hilger F."/>
        </authorList>
    </citation>
    <scope>NUCLEOTIDE SEQUENCE [GENOMIC DNA]</scope>
    <source>
        <strain>ATCC 204508 / S288c</strain>
    </source>
</reference>
<reference key="2">
    <citation type="journal article" date="1996" name="EMBO J.">
        <title>Complete nucleotide sequence of Saccharomyces cerevisiae chromosome X.</title>
        <authorList>
            <person name="Galibert F."/>
            <person name="Alexandraki D."/>
            <person name="Baur A."/>
            <person name="Boles E."/>
            <person name="Chalwatzis N."/>
            <person name="Chuat J.-C."/>
            <person name="Coster F."/>
            <person name="Cziepluch C."/>
            <person name="de Haan M."/>
            <person name="Domdey H."/>
            <person name="Durand P."/>
            <person name="Entian K.-D."/>
            <person name="Gatius M."/>
            <person name="Goffeau A."/>
            <person name="Grivell L.A."/>
            <person name="Hennemann A."/>
            <person name="Herbert C.J."/>
            <person name="Heumann K."/>
            <person name="Hilger F."/>
            <person name="Hollenberg C.P."/>
            <person name="Huang M.-E."/>
            <person name="Jacq C."/>
            <person name="Jauniaux J.-C."/>
            <person name="Katsoulou C."/>
            <person name="Kirchrath L."/>
            <person name="Kleine K."/>
            <person name="Kordes E."/>
            <person name="Koetter P."/>
            <person name="Liebl S."/>
            <person name="Louis E.J."/>
            <person name="Manus V."/>
            <person name="Mewes H.-W."/>
            <person name="Miosga T."/>
            <person name="Obermaier B."/>
            <person name="Perea J."/>
            <person name="Pohl T.M."/>
            <person name="Portetelle D."/>
            <person name="Pujol A."/>
            <person name="Purnelle B."/>
            <person name="Ramezani Rad M."/>
            <person name="Rasmussen S.W."/>
            <person name="Rose M."/>
            <person name="Rossau R."/>
            <person name="Schaaff-Gerstenschlaeger I."/>
            <person name="Smits P.H.M."/>
            <person name="Scarcez T."/>
            <person name="Soriano N."/>
            <person name="To Van D."/>
            <person name="Tzermia M."/>
            <person name="Van Broekhoven A."/>
            <person name="Vandenbol M."/>
            <person name="Wedler H."/>
            <person name="von Wettstein D."/>
            <person name="Wambutt R."/>
            <person name="Zagulski M."/>
            <person name="Zollner A."/>
            <person name="Karpfinger-Hartl L."/>
        </authorList>
    </citation>
    <scope>NUCLEOTIDE SEQUENCE [LARGE SCALE GENOMIC DNA]</scope>
    <source>
        <strain>ATCC 204508 / S288c</strain>
    </source>
</reference>
<reference key="3">
    <citation type="journal article" date="2014" name="G3 (Bethesda)">
        <title>The reference genome sequence of Saccharomyces cerevisiae: Then and now.</title>
        <authorList>
            <person name="Engel S.R."/>
            <person name="Dietrich F.S."/>
            <person name="Fisk D.G."/>
            <person name="Binkley G."/>
            <person name="Balakrishnan R."/>
            <person name="Costanzo M.C."/>
            <person name="Dwight S.S."/>
            <person name="Hitz B.C."/>
            <person name="Karra K."/>
            <person name="Nash R.S."/>
            <person name="Weng S."/>
            <person name="Wong E.D."/>
            <person name="Lloyd P."/>
            <person name="Skrzypek M.S."/>
            <person name="Miyasato S.R."/>
            <person name="Simison M."/>
            <person name="Cherry J.M."/>
        </authorList>
    </citation>
    <scope>GENOME REANNOTATION</scope>
    <source>
        <strain>ATCC 204508 / S288c</strain>
    </source>
</reference>
<reference key="4">
    <citation type="journal article" date="2002" name="Nat. Biotechnol.">
        <title>An integrated approach for finding overlooked genes in yeast.</title>
        <authorList>
            <person name="Kumar A."/>
            <person name="Harrison P.M."/>
            <person name="Cheung K.-H."/>
            <person name="Lan N."/>
            <person name="Echols N."/>
            <person name="Bertone P."/>
            <person name="Miller P."/>
            <person name="Gerstein M.B."/>
            <person name="Snyder M."/>
        </authorList>
    </citation>
    <scope>NUCLEOTIDE SEQUENCE [GENOMIC DNA]</scope>
</reference>
<sequence>MPIIGVPRCLEKPFCAPAKFPFSVKKNIRILDLDPRTEAYCLSLNSVCSKRLPCKKYFYLLNSYNIKRVLGVVYC</sequence>
<dbReference type="EMBL" id="Z34098">
    <property type="status" value="NOT_ANNOTATED_CDS"/>
    <property type="molecule type" value="Genomic_DNA"/>
</dbReference>
<dbReference type="EMBL" id="Z49497">
    <property type="status" value="NOT_ANNOTATED_CDS"/>
    <property type="molecule type" value="Genomic_DNA"/>
</dbReference>
<dbReference type="EMBL" id="Z49498">
    <property type="status" value="NOT_ANNOTATED_CDS"/>
    <property type="molecule type" value="Genomic_DNA"/>
</dbReference>
<dbReference type="EMBL" id="AF480003">
    <property type="protein sequence ID" value="AAL79316.1"/>
    <property type="molecule type" value="Genomic_DNA"/>
</dbReference>
<dbReference type="EnsemblFungi" id="YJL222W-A_mRNA">
    <property type="protein sequence ID" value="YJL222W-A"/>
    <property type="gene ID" value="YJL222W-A"/>
</dbReference>
<dbReference type="AGR" id="SGD:S000028663"/>
<dbReference type="SGD" id="S000028663">
    <property type="gene designation" value="YJL222W-A"/>
</dbReference>
<dbReference type="GeneTree" id="ENSGT00940000177730"/>
<dbReference type="HOGENOM" id="CLU_183954_0_0_1"/>
<name>YJL2A_YEAST</name>
<proteinExistence type="uncertain"/>
<comment type="similarity">
    <text evidence="1">Belongs to the UPF0377 family.</text>
</comment>
<comment type="caution">
    <text evidence="2">Product of a dubious gene prediction unlikely to encode a functional protein. Because of that it is not part of the S.cerevisiae S288c complete/reference proteome set.</text>
</comment>
<protein>
    <recommendedName>
        <fullName>Putative UPF0377 protein YJL222W-A</fullName>
    </recommendedName>
</protein>
<evidence type="ECO:0000305" key="1"/>
<evidence type="ECO:0000305" key="2">
    <source>
    </source>
</evidence>
<accession>P0CL26</accession>
<accession>P40437</accession>
<accession>Q547K6</accession>
<organism>
    <name type="scientific">Saccharomyces cerevisiae (strain ATCC 204508 / S288c)</name>
    <name type="common">Baker's yeast</name>
    <dbReference type="NCBI Taxonomy" id="559292"/>
    <lineage>
        <taxon>Eukaryota</taxon>
        <taxon>Fungi</taxon>
        <taxon>Dikarya</taxon>
        <taxon>Ascomycota</taxon>
        <taxon>Saccharomycotina</taxon>
        <taxon>Saccharomycetes</taxon>
        <taxon>Saccharomycetales</taxon>
        <taxon>Saccharomycetaceae</taxon>
        <taxon>Saccharomyces</taxon>
    </lineage>
</organism>